<protein>
    <recommendedName>
        <fullName evidence="1">Co-chaperonin GroES</fullName>
    </recommendedName>
    <alternativeName>
        <fullName evidence="1">10 kDa chaperonin</fullName>
    </alternativeName>
    <alternativeName>
        <fullName evidence="1">Chaperonin-10</fullName>
        <shortName evidence="1">Cpn10</shortName>
    </alternativeName>
</protein>
<evidence type="ECO:0000255" key="1">
    <source>
        <dbReference type="HAMAP-Rule" id="MF_00580"/>
    </source>
</evidence>
<proteinExistence type="inferred from homology"/>
<feature type="chain" id="PRO_1000212108" description="Co-chaperonin GroES">
    <location>
        <begin position="1"/>
        <end position="95"/>
    </location>
</feature>
<sequence length="95" mass="10141">MNIRPLGDRVVIKRVEAEETTKSGIVLPGAAKEKPQVAEVIAVGPGGLVDGKEVKMELKVGDKVLFSKYAGNEVKIEGEEVTILKQDDILAVVEG</sequence>
<organism>
    <name type="scientific">Clostridium botulinum (strain 657 / Type Ba4)</name>
    <dbReference type="NCBI Taxonomy" id="515621"/>
    <lineage>
        <taxon>Bacteria</taxon>
        <taxon>Bacillati</taxon>
        <taxon>Bacillota</taxon>
        <taxon>Clostridia</taxon>
        <taxon>Eubacteriales</taxon>
        <taxon>Clostridiaceae</taxon>
        <taxon>Clostridium</taxon>
    </lineage>
</organism>
<reference key="1">
    <citation type="submission" date="2008-05" db="EMBL/GenBank/DDBJ databases">
        <title>Genome sequence of Clostridium botulinum Ba4 strain 657.</title>
        <authorList>
            <person name="Shrivastava S."/>
            <person name="Brown J.L."/>
            <person name="Bruce D."/>
            <person name="Detter C."/>
            <person name="Munk C."/>
            <person name="Smith L.A."/>
            <person name="Smith T.J."/>
            <person name="Sutton G."/>
            <person name="Brettin T.S."/>
        </authorList>
    </citation>
    <scope>NUCLEOTIDE SEQUENCE [LARGE SCALE GENOMIC DNA]</scope>
    <source>
        <strain>657 / Type Ba4</strain>
    </source>
</reference>
<dbReference type="EMBL" id="CP001083">
    <property type="protein sequence ID" value="ACQ52401.1"/>
    <property type="molecule type" value="Genomic_DNA"/>
</dbReference>
<dbReference type="RefSeq" id="WP_003357350.1">
    <property type="nucleotide sequence ID" value="NC_012658.1"/>
</dbReference>
<dbReference type="SMR" id="C3KUC9"/>
<dbReference type="KEGG" id="cbi:CLJ_B3580"/>
<dbReference type="HOGENOM" id="CLU_132825_2_0_9"/>
<dbReference type="Proteomes" id="UP000002333">
    <property type="component" value="Chromosome"/>
</dbReference>
<dbReference type="GO" id="GO:0005737">
    <property type="term" value="C:cytoplasm"/>
    <property type="evidence" value="ECO:0007669"/>
    <property type="project" value="UniProtKB-SubCell"/>
</dbReference>
<dbReference type="GO" id="GO:0005524">
    <property type="term" value="F:ATP binding"/>
    <property type="evidence" value="ECO:0007669"/>
    <property type="project" value="InterPro"/>
</dbReference>
<dbReference type="GO" id="GO:0046872">
    <property type="term" value="F:metal ion binding"/>
    <property type="evidence" value="ECO:0007669"/>
    <property type="project" value="TreeGrafter"/>
</dbReference>
<dbReference type="GO" id="GO:0044183">
    <property type="term" value="F:protein folding chaperone"/>
    <property type="evidence" value="ECO:0007669"/>
    <property type="project" value="InterPro"/>
</dbReference>
<dbReference type="GO" id="GO:0051087">
    <property type="term" value="F:protein-folding chaperone binding"/>
    <property type="evidence" value="ECO:0007669"/>
    <property type="project" value="TreeGrafter"/>
</dbReference>
<dbReference type="GO" id="GO:0051082">
    <property type="term" value="F:unfolded protein binding"/>
    <property type="evidence" value="ECO:0007669"/>
    <property type="project" value="TreeGrafter"/>
</dbReference>
<dbReference type="GO" id="GO:0051085">
    <property type="term" value="P:chaperone cofactor-dependent protein refolding"/>
    <property type="evidence" value="ECO:0007669"/>
    <property type="project" value="TreeGrafter"/>
</dbReference>
<dbReference type="CDD" id="cd00320">
    <property type="entry name" value="cpn10"/>
    <property type="match status" value="1"/>
</dbReference>
<dbReference type="FunFam" id="2.30.33.40:FF:000001">
    <property type="entry name" value="10 kDa chaperonin"/>
    <property type="match status" value="1"/>
</dbReference>
<dbReference type="Gene3D" id="2.30.33.40">
    <property type="entry name" value="GroES chaperonin"/>
    <property type="match status" value="1"/>
</dbReference>
<dbReference type="HAMAP" id="MF_00580">
    <property type="entry name" value="CH10"/>
    <property type="match status" value="1"/>
</dbReference>
<dbReference type="InterPro" id="IPR020818">
    <property type="entry name" value="Chaperonin_GroES"/>
</dbReference>
<dbReference type="InterPro" id="IPR037124">
    <property type="entry name" value="Chaperonin_GroES_sf"/>
</dbReference>
<dbReference type="InterPro" id="IPR018369">
    <property type="entry name" value="Chaprnonin_Cpn10_CS"/>
</dbReference>
<dbReference type="InterPro" id="IPR011032">
    <property type="entry name" value="GroES-like_sf"/>
</dbReference>
<dbReference type="NCBIfam" id="NF001527">
    <property type="entry name" value="PRK00364.1-2"/>
    <property type="match status" value="1"/>
</dbReference>
<dbReference type="NCBIfam" id="NF001531">
    <property type="entry name" value="PRK00364.2-2"/>
    <property type="match status" value="1"/>
</dbReference>
<dbReference type="NCBIfam" id="NF001533">
    <property type="entry name" value="PRK00364.2-4"/>
    <property type="match status" value="1"/>
</dbReference>
<dbReference type="PANTHER" id="PTHR10772">
    <property type="entry name" value="10 KDA HEAT SHOCK PROTEIN"/>
    <property type="match status" value="1"/>
</dbReference>
<dbReference type="PANTHER" id="PTHR10772:SF58">
    <property type="entry name" value="CO-CHAPERONIN GROES"/>
    <property type="match status" value="1"/>
</dbReference>
<dbReference type="Pfam" id="PF00166">
    <property type="entry name" value="Cpn10"/>
    <property type="match status" value="1"/>
</dbReference>
<dbReference type="PRINTS" id="PR00297">
    <property type="entry name" value="CHAPERONIN10"/>
</dbReference>
<dbReference type="SMART" id="SM00883">
    <property type="entry name" value="Cpn10"/>
    <property type="match status" value="1"/>
</dbReference>
<dbReference type="SUPFAM" id="SSF50129">
    <property type="entry name" value="GroES-like"/>
    <property type="match status" value="1"/>
</dbReference>
<dbReference type="PROSITE" id="PS00681">
    <property type="entry name" value="CHAPERONINS_CPN10"/>
    <property type="match status" value="1"/>
</dbReference>
<accession>C3KUC9</accession>
<keyword id="KW-0143">Chaperone</keyword>
<keyword id="KW-0963">Cytoplasm</keyword>
<comment type="function">
    <text evidence="1">Together with the chaperonin GroEL, plays an essential role in assisting protein folding. The GroEL-GroES system forms a nano-cage that allows encapsulation of the non-native substrate proteins and provides a physical environment optimized to promote and accelerate protein folding. GroES binds to the apical surface of the GroEL ring, thereby capping the opening of the GroEL channel.</text>
</comment>
<comment type="subunit">
    <text evidence="1">Heptamer of 7 subunits arranged in a ring. Interacts with the chaperonin GroEL.</text>
</comment>
<comment type="subcellular location">
    <subcellularLocation>
        <location evidence="1">Cytoplasm</location>
    </subcellularLocation>
</comment>
<comment type="similarity">
    <text evidence="1">Belongs to the GroES chaperonin family.</text>
</comment>
<name>CH10_CLOB6</name>
<gene>
    <name evidence="1" type="primary">groES</name>
    <name evidence="1" type="synonym">groS</name>
    <name type="ordered locus">CLJ_B3580</name>
</gene>